<keyword id="KW-0687">Ribonucleoprotein</keyword>
<keyword id="KW-0689">Ribosomal protein</keyword>
<evidence type="ECO:0000255" key="1">
    <source>
        <dbReference type="HAMAP-Rule" id="MF_00251"/>
    </source>
</evidence>
<evidence type="ECO:0000305" key="2"/>
<accession>B2S7H9</accession>
<organism>
    <name type="scientific">Brucella abortus (strain S19)</name>
    <dbReference type="NCBI Taxonomy" id="430066"/>
    <lineage>
        <taxon>Bacteria</taxon>
        <taxon>Pseudomonadati</taxon>
        <taxon>Pseudomonadota</taxon>
        <taxon>Alphaproteobacteria</taxon>
        <taxon>Hyphomicrobiales</taxon>
        <taxon>Brucellaceae</taxon>
        <taxon>Brucella/Ochrobactrum group</taxon>
        <taxon>Brucella</taxon>
    </lineage>
</organism>
<sequence length="41" mass="4851">MKIKNSLKALKARHRDCQLVRRKGRVYIINKTAPRFKARQG</sequence>
<name>RL36_BRUA1</name>
<reference key="1">
    <citation type="journal article" date="2008" name="PLoS ONE">
        <title>Genome sequence of Brucella abortus vaccine strain S19 compared to virulent strains yields candidate virulence genes.</title>
        <authorList>
            <person name="Crasta O.R."/>
            <person name="Folkerts O."/>
            <person name="Fei Z."/>
            <person name="Mane S.P."/>
            <person name="Evans C."/>
            <person name="Martino-Catt S."/>
            <person name="Bricker B."/>
            <person name="Yu G."/>
            <person name="Du L."/>
            <person name="Sobral B.W."/>
        </authorList>
    </citation>
    <scope>NUCLEOTIDE SEQUENCE [LARGE SCALE GENOMIC DNA]</scope>
    <source>
        <strain>S19</strain>
    </source>
</reference>
<feature type="chain" id="PRO_1000101006" description="Large ribosomal subunit protein bL36">
    <location>
        <begin position="1"/>
        <end position="41"/>
    </location>
</feature>
<protein>
    <recommendedName>
        <fullName evidence="1">Large ribosomal subunit protein bL36</fullName>
    </recommendedName>
    <alternativeName>
        <fullName evidence="2">50S ribosomal protein L36</fullName>
    </alternativeName>
</protein>
<dbReference type="EMBL" id="CP000887">
    <property type="protein sequence ID" value="ACD73126.1"/>
    <property type="molecule type" value="Genomic_DNA"/>
</dbReference>
<dbReference type="SMR" id="B2S7H9"/>
<dbReference type="KEGG" id="bmc:BAbS19_I16440"/>
<dbReference type="HOGENOM" id="CLU_135723_3_2_5"/>
<dbReference type="Proteomes" id="UP000002565">
    <property type="component" value="Chromosome 1"/>
</dbReference>
<dbReference type="GO" id="GO:1990904">
    <property type="term" value="C:ribonucleoprotein complex"/>
    <property type="evidence" value="ECO:0007669"/>
    <property type="project" value="UniProtKB-KW"/>
</dbReference>
<dbReference type="GO" id="GO:0005840">
    <property type="term" value="C:ribosome"/>
    <property type="evidence" value="ECO:0007669"/>
    <property type="project" value="UniProtKB-KW"/>
</dbReference>
<dbReference type="GO" id="GO:0003735">
    <property type="term" value="F:structural constituent of ribosome"/>
    <property type="evidence" value="ECO:0007669"/>
    <property type="project" value="InterPro"/>
</dbReference>
<dbReference type="GO" id="GO:0006412">
    <property type="term" value="P:translation"/>
    <property type="evidence" value="ECO:0007669"/>
    <property type="project" value="UniProtKB-UniRule"/>
</dbReference>
<dbReference type="HAMAP" id="MF_00251">
    <property type="entry name" value="Ribosomal_bL36"/>
    <property type="match status" value="1"/>
</dbReference>
<dbReference type="InterPro" id="IPR000473">
    <property type="entry name" value="Ribosomal_bL36"/>
</dbReference>
<dbReference type="InterPro" id="IPR035977">
    <property type="entry name" value="Ribosomal_bL36_sp"/>
</dbReference>
<dbReference type="InterPro" id="IPR047621">
    <property type="entry name" value="Ribosomal_L36_bact"/>
</dbReference>
<dbReference type="NCBIfam" id="NF002021">
    <property type="entry name" value="PRK00831.1"/>
    <property type="match status" value="1"/>
</dbReference>
<dbReference type="NCBIfam" id="TIGR01022">
    <property type="entry name" value="rpmJ_bact"/>
    <property type="match status" value="1"/>
</dbReference>
<dbReference type="PANTHER" id="PTHR47781">
    <property type="entry name" value="50S RIBOSOMAL PROTEIN L36 2"/>
    <property type="match status" value="1"/>
</dbReference>
<dbReference type="PANTHER" id="PTHR47781:SF1">
    <property type="entry name" value="LARGE RIBOSOMAL SUBUNIT PROTEIN BL36B"/>
    <property type="match status" value="1"/>
</dbReference>
<dbReference type="Pfam" id="PF00444">
    <property type="entry name" value="Ribosomal_L36"/>
    <property type="match status" value="1"/>
</dbReference>
<dbReference type="SUPFAM" id="SSF57840">
    <property type="entry name" value="Ribosomal protein L36"/>
    <property type="match status" value="1"/>
</dbReference>
<dbReference type="PROSITE" id="PS00828">
    <property type="entry name" value="RIBOSOMAL_L36"/>
    <property type="match status" value="1"/>
</dbReference>
<gene>
    <name evidence="1" type="primary">rpmJ</name>
    <name type="ordered locus">BAbS19_I16440</name>
</gene>
<comment type="similarity">
    <text evidence="1">Belongs to the bacterial ribosomal protein bL36 family.</text>
</comment>
<proteinExistence type="inferred from homology"/>